<evidence type="ECO:0000255" key="1">
    <source>
        <dbReference type="HAMAP-Rule" id="MF_01001"/>
    </source>
</evidence>
<gene>
    <name evidence="1" type="primary">wecG</name>
    <name evidence="1" type="synonym">rffM</name>
    <name type="ordered locus">c4716</name>
</gene>
<reference key="1">
    <citation type="journal article" date="2002" name="Proc. Natl. Acad. Sci. U.S.A.">
        <title>Extensive mosaic structure revealed by the complete genome sequence of uropathogenic Escherichia coli.</title>
        <authorList>
            <person name="Welch R.A."/>
            <person name="Burland V."/>
            <person name="Plunkett G. III"/>
            <person name="Redford P."/>
            <person name="Roesch P."/>
            <person name="Rasko D."/>
            <person name="Buckles E.L."/>
            <person name="Liou S.-R."/>
            <person name="Boutin A."/>
            <person name="Hackett J."/>
            <person name="Stroud D."/>
            <person name="Mayhew G.F."/>
            <person name="Rose D.J."/>
            <person name="Zhou S."/>
            <person name="Schwartz D.C."/>
            <person name="Perna N.T."/>
            <person name="Mobley H.L.T."/>
            <person name="Donnenberg M.S."/>
            <person name="Blattner F.R."/>
        </authorList>
    </citation>
    <scope>NUCLEOTIDE SEQUENCE [LARGE SCALE GENOMIC DNA]</scope>
    <source>
        <strain>CFT073 / ATCC 700928 / UPEC</strain>
    </source>
</reference>
<comment type="function">
    <text evidence="1">Catalyzes the synthesis of Und-PP-GlcNAc-ManNAcA (Lipid II), the second lipid-linked intermediate involved in enterobacterial common antigen (ECA) synthesis.</text>
</comment>
<comment type="catalytic activity">
    <reaction evidence="1">
        <text>UDP-N-acetyl-alpha-D-mannosaminouronate + N-acetyl-alpha-D-glucosaminyl-di-trans,octa-cis-undecaprenyl diphosphate = beta-D-ManNAcA-(1-&gt;4)-alpha-D-GlcNAc-di-trans,octa-cis-undecaprenyl diphosphate + UDP + H(+)</text>
        <dbReference type="Rhea" id="RHEA:28366"/>
        <dbReference type="ChEBI" id="CHEBI:15378"/>
        <dbReference type="ChEBI" id="CHEBI:58223"/>
        <dbReference type="ChEBI" id="CHEBI:61495"/>
        <dbReference type="ChEBI" id="CHEBI:62959"/>
        <dbReference type="ChEBI" id="CHEBI:70731"/>
        <dbReference type="EC" id="2.4.1.180"/>
    </reaction>
</comment>
<comment type="pathway">
    <text evidence="1">Bacterial outer membrane biogenesis; enterobacterial common antigen biosynthesis.</text>
</comment>
<comment type="similarity">
    <text evidence="1">Belongs to the glycosyltransferase 26 family.</text>
</comment>
<proteinExistence type="inferred from homology"/>
<feature type="chain" id="PRO_0000208427" description="UDP-N-acetyl-D-mannosaminuronic acid transferase">
    <location>
        <begin position="1"/>
        <end position="246"/>
    </location>
</feature>
<accession>Q8FBP7</accession>
<protein>
    <recommendedName>
        <fullName evidence="1">UDP-N-acetyl-D-mannosaminuronic acid transferase</fullName>
        <shortName evidence="1">UDP-ManNAcA transferase</shortName>
        <ecNumber evidence="1">2.4.1.180</ecNumber>
    </recommendedName>
</protein>
<keyword id="KW-0328">Glycosyltransferase</keyword>
<keyword id="KW-1185">Reference proteome</keyword>
<keyword id="KW-0808">Transferase</keyword>
<sequence>MNNNTTAPTYTLRGLQLIGWRDMQHALDYLFADGQLKQGTLVAINAEKMLTIEDNAEVRELINAAEFKYADGISVVRSVRKKYPQAQVSRVAGADLWEELMARAGKEGTPVFLVGGKPEVLAQTEAKLRNQWNVNIVGSQDGYFKPEQRQALFERIHASGAQIVTVAMGSPKQEIFMRDCRLVHPDALYMGVGGTYDVFTGHVKRAPKIWQTLGLEWLYRLLSQPSRIKRQLRLLRYLRWHYTGNL</sequence>
<organism>
    <name type="scientific">Escherichia coli O6:H1 (strain CFT073 / ATCC 700928 / UPEC)</name>
    <dbReference type="NCBI Taxonomy" id="199310"/>
    <lineage>
        <taxon>Bacteria</taxon>
        <taxon>Pseudomonadati</taxon>
        <taxon>Pseudomonadota</taxon>
        <taxon>Gammaproteobacteria</taxon>
        <taxon>Enterobacterales</taxon>
        <taxon>Enterobacteriaceae</taxon>
        <taxon>Escherichia</taxon>
    </lineage>
</organism>
<name>WECG_ECOL6</name>
<dbReference type="EC" id="2.4.1.180" evidence="1"/>
<dbReference type="EMBL" id="AE014075">
    <property type="protein sequence ID" value="AAN83149.1"/>
    <property type="molecule type" value="Genomic_DNA"/>
</dbReference>
<dbReference type="RefSeq" id="WP_001064038.1">
    <property type="nucleotide sequence ID" value="NZ_CP051263.1"/>
</dbReference>
<dbReference type="SMR" id="Q8FBP7"/>
<dbReference type="STRING" id="199310.c4716"/>
<dbReference type="CAZy" id="GT26">
    <property type="family name" value="Glycosyltransferase Family 26"/>
</dbReference>
<dbReference type="GeneID" id="93778149"/>
<dbReference type="KEGG" id="ecc:c4716"/>
<dbReference type="eggNOG" id="COG1922">
    <property type="taxonomic scope" value="Bacteria"/>
</dbReference>
<dbReference type="HOGENOM" id="CLU_063203_3_2_6"/>
<dbReference type="BioCyc" id="ECOL199310:C4716-MONOMER"/>
<dbReference type="UniPathway" id="UPA00566"/>
<dbReference type="Proteomes" id="UP000001410">
    <property type="component" value="Chromosome"/>
</dbReference>
<dbReference type="GO" id="GO:0047241">
    <property type="term" value="F:lipopolysaccharide N-acetylmannosaminouronosyltransferase activity"/>
    <property type="evidence" value="ECO:0007669"/>
    <property type="project" value="UniProtKB-UniRule"/>
</dbReference>
<dbReference type="GO" id="GO:0009246">
    <property type="term" value="P:enterobacterial common antigen biosynthetic process"/>
    <property type="evidence" value="ECO:0007669"/>
    <property type="project" value="UniProtKB-UniRule"/>
</dbReference>
<dbReference type="CDD" id="cd06533">
    <property type="entry name" value="Glyco_transf_WecG_TagA"/>
    <property type="match status" value="1"/>
</dbReference>
<dbReference type="HAMAP" id="MF_01001">
    <property type="entry name" value="WecG_RffM"/>
    <property type="match status" value="1"/>
</dbReference>
<dbReference type="InterPro" id="IPR023085">
    <property type="entry name" value="UDP-ManNAcA_Trfase_WecG"/>
</dbReference>
<dbReference type="InterPro" id="IPR004629">
    <property type="entry name" value="WecG_TagA_CpsF"/>
</dbReference>
<dbReference type="NCBIfam" id="NF002980">
    <property type="entry name" value="PRK03692.1"/>
    <property type="match status" value="1"/>
</dbReference>
<dbReference type="NCBIfam" id="TIGR00696">
    <property type="entry name" value="wecG_tagA_cpsF"/>
    <property type="match status" value="1"/>
</dbReference>
<dbReference type="PANTHER" id="PTHR34136">
    <property type="match status" value="1"/>
</dbReference>
<dbReference type="PANTHER" id="PTHR34136:SF1">
    <property type="entry name" value="UDP-N-ACETYL-D-MANNOSAMINURONIC ACID TRANSFERASE"/>
    <property type="match status" value="1"/>
</dbReference>
<dbReference type="Pfam" id="PF03808">
    <property type="entry name" value="Glyco_tran_WecG"/>
    <property type="match status" value="1"/>
</dbReference>